<proteinExistence type="evidence at protein level"/>
<feature type="chain" id="PRO_0000055521" description="Unknown protein from spot 77 of 2D-PAGE of etiolated coleoptile">
    <location>
        <begin position="1" status="less than"/>
        <end position="15" status="greater than"/>
    </location>
</feature>
<feature type="non-terminal residue">
    <location>
        <position position="1"/>
    </location>
</feature>
<feature type="non-terminal residue">
    <location>
        <position position="15"/>
    </location>
</feature>
<sequence>AIGGLSRSFPVEAFE</sequence>
<organism>
    <name type="scientific">Zea mays</name>
    <name type="common">Maize</name>
    <dbReference type="NCBI Taxonomy" id="4577"/>
    <lineage>
        <taxon>Eukaryota</taxon>
        <taxon>Viridiplantae</taxon>
        <taxon>Streptophyta</taxon>
        <taxon>Embryophyta</taxon>
        <taxon>Tracheophyta</taxon>
        <taxon>Spermatophyta</taxon>
        <taxon>Magnoliopsida</taxon>
        <taxon>Liliopsida</taxon>
        <taxon>Poales</taxon>
        <taxon>Poaceae</taxon>
        <taxon>PACMAD clade</taxon>
        <taxon>Panicoideae</taxon>
        <taxon>Andropogonodae</taxon>
        <taxon>Andropogoneae</taxon>
        <taxon>Tripsacinae</taxon>
        <taxon>Zea</taxon>
    </lineage>
</organism>
<name>UC25_MAIZE</name>
<keyword id="KW-0903">Direct protein sequencing</keyword>
<keyword id="KW-1185">Reference proteome</keyword>
<protein>
    <recommendedName>
        <fullName>Unknown protein from spot 77 of 2D-PAGE of etiolated coleoptile</fullName>
    </recommendedName>
</protein>
<comment type="miscellaneous">
    <text>On the 2D-gel the determined pI of this unknown protein is: 4.9, its MW is: 31.6 kDa.</text>
</comment>
<accession>P80631</accession>
<dbReference type="MaizeGDB" id="123957"/>
<dbReference type="InParanoid" id="P80631"/>
<dbReference type="Proteomes" id="UP000007305">
    <property type="component" value="Unplaced"/>
</dbReference>
<reference key="1">
    <citation type="journal article" date="1996" name="Theor. Appl. Genet.">
        <title>The maize two dimensional gel protein database: towards an integrated genome analysis program.</title>
        <authorList>
            <person name="Touzet P."/>
            <person name="Riccardi F."/>
            <person name="Morin C."/>
            <person name="Damerval C."/>
            <person name="Huet J.-C."/>
            <person name="Pernollet J.-C."/>
            <person name="Zivy M."/>
            <person name="de Vienne D."/>
        </authorList>
        <dbReference type="AGRICOLA" id="IND20551642"/>
    </citation>
    <scope>PROTEIN SEQUENCE</scope>
    <source>
        <tissue>Coleoptile</tissue>
    </source>
</reference>